<keyword id="KW-0030">Aminoacyl-tRNA synthetase</keyword>
<keyword id="KW-0067">ATP-binding</keyword>
<keyword id="KW-0963">Cytoplasm</keyword>
<keyword id="KW-0436">Ligase</keyword>
<keyword id="KW-0479">Metal-binding</keyword>
<keyword id="KW-0547">Nucleotide-binding</keyword>
<keyword id="KW-0648">Protein biosynthesis</keyword>
<keyword id="KW-0862">Zinc</keyword>
<protein>
    <recommendedName>
        <fullName>Isoleucine--tRNA ligase</fullName>
        <ecNumber>6.1.1.5</ecNumber>
    </recommendedName>
    <alternativeName>
        <fullName>Isoleucyl-tRNA synthetase</fullName>
        <shortName>IleRS</shortName>
    </alternativeName>
</protein>
<organism>
    <name type="scientific">Staphylococcus aureus (strain COL)</name>
    <dbReference type="NCBI Taxonomy" id="93062"/>
    <lineage>
        <taxon>Bacteria</taxon>
        <taxon>Bacillati</taxon>
        <taxon>Bacillota</taxon>
        <taxon>Bacilli</taxon>
        <taxon>Bacillales</taxon>
        <taxon>Staphylococcaceae</taxon>
        <taxon>Staphylococcus</taxon>
    </lineage>
</organism>
<accession>Q5HGN8</accession>
<evidence type="ECO:0000250" key="1"/>
<evidence type="ECO:0000305" key="2"/>
<dbReference type="EC" id="6.1.1.5"/>
<dbReference type="EMBL" id="CP000046">
    <property type="protein sequence ID" value="AAW38043.1"/>
    <property type="molecule type" value="Genomic_DNA"/>
</dbReference>
<dbReference type="RefSeq" id="WP_000384691.1">
    <property type="nucleotide sequence ID" value="NZ_JBGOFO010000002.1"/>
</dbReference>
<dbReference type="SMR" id="Q5HGN8"/>
<dbReference type="KEGG" id="sac:SACOL1206"/>
<dbReference type="HOGENOM" id="CLU_001493_7_1_9"/>
<dbReference type="Proteomes" id="UP000000530">
    <property type="component" value="Chromosome"/>
</dbReference>
<dbReference type="GO" id="GO:0005829">
    <property type="term" value="C:cytosol"/>
    <property type="evidence" value="ECO:0007669"/>
    <property type="project" value="TreeGrafter"/>
</dbReference>
<dbReference type="GO" id="GO:0002161">
    <property type="term" value="F:aminoacyl-tRNA deacylase activity"/>
    <property type="evidence" value="ECO:0007669"/>
    <property type="project" value="InterPro"/>
</dbReference>
<dbReference type="GO" id="GO:0005524">
    <property type="term" value="F:ATP binding"/>
    <property type="evidence" value="ECO:0007669"/>
    <property type="project" value="UniProtKB-UniRule"/>
</dbReference>
<dbReference type="GO" id="GO:0004822">
    <property type="term" value="F:isoleucine-tRNA ligase activity"/>
    <property type="evidence" value="ECO:0007669"/>
    <property type="project" value="UniProtKB-UniRule"/>
</dbReference>
<dbReference type="GO" id="GO:0000049">
    <property type="term" value="F:tRNA binding"/>
    <property type="evidence" value="ECO:0007669"/>
    <property type="project" value="InterPro"/>
</dbReference>
<dbReference type="GO" id="GO:0008270">
    <property type="term" value="F:zinc ion binding"/>
    <property type="evidence" value="ECO:0007669"/>
    <property type="project" value="UniProtKB-UniRule"/>
</dbReference>
<dbReference type="GO" id="GO:0006428">
    <property type="term" value="P:isoleucyl-tRNA aminoacylation"/>
    <property type="evidence" value="ECO:0007669"/>
    <property type="project" value="UniProtKB-UniRule"/>
</dbReference>
<dbReference type="CDD" id="cd07960">
    <property type="entry name" value="Anticodon_Ia_Ile_BEm"/>
    <property type="match status" value="1"/>
</dbReference>
<dbReference type="CDD" id="cd00818">
    <property type="entry name" value="IleRS_core"/>
    <property type="match status" value="1"/>
</dbReference>
<dbReference type="FunFam" id="1.10.10.830:FF:000001">
    <property type="entry name" value="Isoleucine--tRNA ligase"/>
    <property type="match status" value="1"/>
</dbReference>
<dbReference type="FunFam" id="1.10.730.20:FF:000001">
    <property type="entry name" value="Isoleucine--tRNA ligase"/>
    <property type="match status" value="1"/>
</dbReference>
<dbReference type="FunFam" id="3.40.50.620:FF:000152">
    <property type="entry name" value="Isoleucine--tRNA ligase"/>
    <property type="match status" value="1"/>
</dbReference>
<dbReference type="FunFam" id="3.90.740.10:FF:000006">
    <property type="entry name" value="Isoleucine--tRNA ligase"/>
    <property type="match status" value="1"/>
</dbReference>
<dbReference type="Gene3D" id="1.10.730.20">
    <property type="match status" value="1"/>
</dbReference>
<dbReference type="Gene3D" id="3.40.50.620">
    <property type="entry name" value="HUPs"/>
    <property type="match status" value="2"/>
</dbReference>
<dbReference type="Gene3D" id="1.10.10.830">
    <property type="entry name" value="Ile-tRNA synthetase CP2 domain-like"/>
    <property type="match status" value="1"/>
</dbReference>
<dbReference type="HAMAP" id="MF_02002">
    <property type="entry name" value="Ile_tRNA_synth_type1"/>
    <property type="match status" value="1"/>
</dbReference>
<dbReference type="InterPro" id="IPR001412">
    <property type="entry name" value="aa-tRNA-synth_I_CS"/>
</dbReference>
<dbReference type="InterPro" id="IPR002300">
    <property type="entry name" value="aa-tRNA-synth_Ia"/>
</dbReference>
<dbReference type="InterPro" id="IPR033708">
    <property type="entry name" value="Anticodon_Ile_BEm"/>
</dbReference>
<dbReference type="InterPro" id="IPR002301">
    <property type="entry name" value="Ile-tRNA-ligase"/>
</dbReference>
<dbReference type="InterPro" id="IPR023585">
    <property type="entry name" value="Ile-tRNA-ligase_type1"/>
</dbReference>
<dbReference type="InterPro" id="IPR050081">
    <property type="entry name" value="Ile-tRNA_ligase"/>
</dbReference>
<dbReference type="InterPro" id="IPR013155">
    <property type="entry name" value="M/V/L/I-tRNA-synth_anticd-bd"/>
</dbReference>
<dbReference type="InterPro" id="IPR014729">
    <property type="entry name" value="Rossmann-like_a/b/a_fold"/>
</dbReference>
<dbReference type="InterPro" id="IPR009080">
    <property type="entry name" value="tRNAsynth_Ia_anticodon-bd"/>
</dbReference>
<dbReference type="InterPro" id="IPR009008">
    <property type="entry name" value="Val/Leu/Ile-tRNA-synth_edit"/>
</dbReference>
<dbReference type="InterPro" id="IPR010663">
    <property type="entry name" value="Znf_FPG/IleRS"/>
</dbReference>
<dbReference type="NCBIfam" id="TIGR00392">
    <property type="entry name" value="ileS"/>
    <property type="match status" value="1"/>
</dbReference>
<dbReference type="PANTHER" id="PTHR42765:SF1">
    <property type="entry name" value="ISOLEUCINE--TRNA LIGASE, MITOCHONDRIAL"/>
    <property type="match status" value="1"/>
</dbReference>
<dbReference type="PANTHER" id="PTHR42765">
    <property type="entry name" value="SOLEUCYL-TRNA SYNTHETASE"/>
    <property type="match status" value="1"/>
</dbReference>
<dbReference type="Pfam" id="PF08264">
    <property type="entry name" value="Anticodon_1"/>
    <property type="match status" value="1"/>
</dbReference>
<dbReference type="Pfam" id="PF00133">
    <property type="entry name" value="tRNA-synt_1"/>
    <property type="match status" value="1"/>
</dbReference>
<dbReference type="Pfam" id="PF06827">
    <property type="entry name" value="zf-FPG_IleRS"/>
    <property type="match status" value="1"/>
</dbReference>
<dbReference type="PRINTS" id="PR00984">
    <property type="entry name" value="TRNASYNTHILE"/>
</dbReference>
<dbReference type="SUPFAM" id="SSF47323">
    <property type="entry name" value="Anticodon-binding domain of a subclass of class I aminoacyl-tRNA synthetases"/>
    <property type="match status" value="1"/>
</dbReference>
<dbReference type="SUPFAM" id="SSF52374">
    <property type="entry name" value="Nucleotidylyl transferase"/>
    <property type="match status" value="1"/>
</dbReference>
<dbReference type="SUPFAM" id="SSF50677">
    <property type="entry name" value="ValRS/IleRS/LeuRS editing domain"/>
    <property type="match status" value="1"/>
</dbReference>
<dbReference type="PROSITE" id="PS00178">
    <property type="entry name" value="AA_TRNA_LIGASE_I"/>
    <property type="match status" value="1"/>
</dbReference>
<reference key="1">
    <citation type="journal article" date="2005" name="J. Bacteriol.">
        <title>Insights on evolution of virulence and resistance from the complete genome analysis of an early methicillin-resistant Staphylococcus aureus strain and a biofilm-producing methicillin-resistant Staphylococcus epidermidis strain.</title>
        <authorList>
            <person name="Gill S.R."/>
            <person name="Fouts D.E."/>
            <person name="Archer G.L."/>
            <person name="Mongodin E.F."/>
            <person name="DeBoy R.T."/>
            <person name="Ravel J."/>
            <person name="Paulsen I.T."/>
            <person name="Kolonay J.F."/>
            <person name="Brinkac L.M."/>
            <person name="Beanan M.J."/>
            <person name="Dodson R.J."/>
            <person name="Daugherty S.C."/>
            <person name="Madupu R."/>
            <person name="Angiuoli S.V."/>
            <person name="Durkin A.S."/>
            <person name="Haft D.H."/>
            <person name="Vamathevan J.J."/>
            <person name="Khouri H."/>
            <person name="Utterback T.R."/>
            <person name="Lee C."/>
            <person name="Dimitrov G."/>
            <person name="Jiang L."/>
            <person name="Qin H."/>
            <person name="Weidman J."/>
            <person name="Tran K."/>
            <person name="Kang K.H."/>
            <person name="Hance I.R."/>
            <person name="Nelson K.E."/>
            <person name="Fraser C.M."/>
        </authorList>
    </citation>
    <scope>NUCLEOTIDE SEQUENCE [LARGE SCALE GENOMIC DNA]</scope>
    <source>
        <strain>COL</strain>
    </source>
</reference>
<proteinExistence type="inferred from homology"/>
<gene>
    <name type="primary">ileS</name>
    <name type="ordered locus">SACOL1206</name>
</gene>
<feature type="chain" id="PRO_0000098464" description="Isoleucine--tRNA ligase">
    <location>
        <begin position="1"/>
        <end position="917"/>
    </location>
</feature>
<feature type="short sequence motif" description="'HIGH' region">
    <location>
        <begin position="57"/>
        <end position="67"/>
    </location>
</feature>
<feature type="short sequence motif" description="'KMSKS' region">
    <location>
        <begin position="595"/>
        <end position="599"/>
    </location>
</feature>
<feature type="binding site" evidence="1">
    <location>
        <position position="554"/>
    </location>
    <ligand>
        <name>L-isoleucyl-5'-AMP</name>
        <dbReference type="ChEBI" id="CHEBI:178002"/>
    </ligand>
</feature>
<feature type="binding site" evidence="1">
    <location>
        <position position="598"/>
    </location>
    <ligand>
        <name>ATP</name>
        <dbReference type="ChEBI" id="CHEBI:30616"/>
    </ligand>
</feature>
<feature type="binding site" evidence="1">
    <location>
        <position position="886"/>
    </location>
    <ligand>
        <name>Zn(2+)</name>
        <dbReference type="ChEBI" id="CHEBI:29105"/>
    </ligand>
</feature>
<feature type="binding site" evidence="1">
    <location>
        <position position="889"/>
    </location>
    <ligand>
        <name>Zn(2+)</name>
        <dbReference type="ChEBI" id="CHEBI:29105"/>
    </ligand>
</feature>
<feature type="binding site" evidence="1">
    <location>
        <position position="906"/>
    </location>
    <ligand>
        <name>Zn(2+)</name>
        <dbReference type="ChEBI" id="CHEBI:29105"/>
    </ligand>
</feature>
<feature type="binding site" evidence="1">
    <location>
        <position position="909"/>
    </location>
    <ligand>
        <name>Zn(2+)</name>
        <dbReference type="ChEBI" id="CHEBI:29105"/>
    </ligand>
</feature>
<sequence length="917" mass="104886">MDYKETLLMPKTDFPMRGGLPNKEPQIQEKWDAEDQYHKALEKNKGNETFILHDGPPYANGNLHMGHALNKILKDFIVRYKTMQGFYAPYVPGWDTHGLPIEQALTKKGVDRKKMSTAEFREKCKEFALEQIELQKKDFRRLGVRGDFNDPYITLKPEYEAAQIRIFGEMADKGLIYKGKKPVYWSPSSESSLAEAEIEYHDKRSASIYVAFDVKDDKGVVDADAKFIIWTTTPWTIPSNVAITVHPELKYGQYNVNGEKYIIAEALSDAVAEALDWDKASIKLEKEYTGKELEYVVAQHPFLDRESLVINGDHVTTDAGTGCVHTAPGHGEDDYIVGQKYELPVISPIDDKGVFTEEGGQFEGMFYDKANKAVTDLLTEKGALLKLDFITHSYPHDWRTKKPVIFRATPQWFASISKVRQDILDAIENTNFKVNWGKTRIYNMVRDRGEWVISRQRVWGVPLPVFYAENGEIIMTKETVNHVADLFAEHGSNIWFEREAKDLLPEGFTHPGSPNGTFTKETDIMDVWFDSGSSHRGVLETRPELSFPADMYLEGSDQYRGWFNSSITTSVATRGVSPYKFLLSHGFVMDGEGKKMSKSLGNVIVPDQVVKQKGADIARLWVSSTDYLADVRISDEILKQTSDVYRKIRNTLRFMLGNINDFNPDTDSIPESELLEVDRYLLNRLREFTASTINNYENFDYLNIYQEVQNFINVELSNFYLDYGKDILYIEQRDSHIRRSMQTVLYQILVDMTKLLAPILVHTAEEVWSHTPHVKEESVHLADMPKVVEVDQALLDKWRTFMNLRDDVNRALETARNEKVIGKSLEAKVTIASNDKFNASEFLTSFDALHQLFIVSQVKVVDKLDDQATAYEHGDIVIEHADGEKCERCWNYSEDLGAVDELTHLCPRCQQVVKSLV</sequence>
<name>SYI_STAAC</name>
<comment type="function">
    <text evidence="1">Catalyzes the attachment of isoleucine to tRNA(Ile). As IleRS can inadvertently accommodate and process structurally similar amino acids such as valine, to avoid such errors it has two additional distinct tRNA(Ile)-dependent editing activities. One activity is designated as 'pretransfer' editing and involves the hydrolysis of activated Val-AMP. The other activity is designated 'posttransfer' editing and involves deacylation of mischarged Val-tRNA(Ile) (By similarity).</text>
</comment>
<comment type="catalytic activity">
    <reaction>
        <text>tRNA(Ile) + L-isoleucine + ATP = L-isoleucyl-tRNA(Ile) + AMP + diphosphate</text>
        <dbReference type="Rhea" id="RHEA:11060"/>
        <dbReference type="Rhea" id="RHEA-COMP:9666"/>
        <dbReference type="Rhea" id="RHEA-COMP:9695"/>
        <dbReference type="ChEBI" id="CHEBI:30616"/>
        <dbReference type="ChEBI" id="CHEBI:33019"/>
        <dbReference type="ChEBI" id="CHEBI:58045"/>
        <dbReference type="ChEBI" id="CHEBI:78442"/>
        <dbReference type="ChEBI" id="CHEBI:78528"/>
        <dbReference type="ChEBI" id="CHEBI:456215"/>
        <dbReference type="EC" id="6.1.1.5"/>
    </reaction>
</comment>
<comment type="cofactor">
    <cofactor evidence="1">
        <name>Zn(2+)</name>
        <dbReference type="ChEBI" id="CHEBI:29105"/>
    </cofactor>
    <text evidence="1">Binds 1 zinc ion per subunit.</text>
</comment>
<comment type="subunit">
    <text evidence="1">Monomer.</text>
</comment>
<comment type="subcellular location">
    <subcellularLocation>
        <location evidence="1">Cytoplasm</location>
    </subcellularLocation>
</comment>
<comment type="domain">
    <text evidence="1">IleRS has two distinct active sites: one for aminoacylation and one for editing. The misactivated valine is translocated from the active site to the editing site, which sterically excludes the correctly activated isoleucine. The single editing site contains two valyl binding pockets, one specific for each substrate (Val-AMP or Val-tRNA(Ile)) (By similarity).</text>
</comment>
<comment type="similarity">
    <text evidence="2">Belongs to the class-I aminoacyl-tRNA synthetase family. IleS type 1 subfamily.</text>
</comment>